<comment type="function">
    <text evidence="2">Potential calcium sensor that modulates ion selectivity of NHX1.</text>
</comment>
<comment type="subunit">
    <text evidence="2">Calcium and pH-dependent interaction with NHX1 (increases when pH decreases, better at pH 5.5 than at pH 7.5). Also interacts with the CPB protein At2g18750.</text>
</comment>
<comment type="subcellular location">
    <subcellularLocation>
        <location evidence="2">Vacuole</location>
    </subcellularLocation>
</comment>
<comment type="caution">
    <text evidence="3">Although assigned as a calmodulin family member by Ref.5, it only contains EF-hand domains.</text>
</comment>
<name>CML18_ARATH</name>
<proteinExistence type="evidence at protein level"/>
<reference key="1">
    <citation type="journal article" date="2000" name="Nature">
        <title>Sequence and analysis of chromosome 3 of the plant Arabidopsis thaliana.</title>
        <authorList>
            <person name="Salanoubat M."/>
            <person name="Lemcke K."/>
            <person name="Rieger M."/>
            <person name="Ansorge W."/>
            <person name="Unseld M."/>
            <person name="Fartmann B."/>
            <person name="Valle G."/>
            <person name="Bloecker H."/>
            <person name="Perez-Alonso M."/>
            <person name="Obermaier B."/>
            <person name="Delseny M."/>
            <person name="Boutry M."/>
            <person name="Grivell L.A."/>
            <person name="Mache R."/>
            <person name="Puigdomenech P."/>
            <person name="De Simone V."/>
            <person name="Choisne N."/>
            <person name="Artiguenave F."/>
            <person name="Robert C."/>
            <person name="Brottier P."/>
            <person name="Wincker P."/>
            <person name="Cattolico L."/>
            <person name="Weissenbach J."/>
            <person name="Saurin W."/>
            <person name="Quetier F."/>
            <person name="Schaefer M."/>
            <person name="Mueller-Auer S."/>
            <person name="Gabel C."/>
            <person name="Fuchs M."/>
            <person name="Benes V."/>
            <person name="Wurmbach E."/>
            <person name="Drzonek H."/>
            <person name="Erfle H."/>
            <person name="Jordan N."/>
            <person name="Bangert S."/>
            <person name="Wiedelmann R."/>
            <person name="Kranz H."/>
            <person name="Voss H."/>
            <person name="Holland R."/>
            <person name="Brandt P."/>
            <person name="Nyakatura G."/>
            <person name="Vezzi A."/>
            <person name="D'Angelo M."/>
            <person name="Pallavicini A."/>
            <person name="Toppo S."/>
            <person name="Simionati B."/>
            <person name="Conrad A."/>
            <person name="Hornischer K."/>
            <person name="Kauer G."/>
            <person name="Loehnert T.-H."/>
            <person name="Nordsiek G."/>
            <person name="Reichelt J."/>
            <person name="Scharfe M."/>
            <person name="Schoen O."/>
            <person name="Bargues M."/>
            <person name="Terol J."/>
            <person name="Climent J."/>
            <person name="Navarro P."/>
            <person name="Collado C."/>
            <person name="Perez-Perez A."/>
            <person name="Ottenwaelder B."/>
            <person name="Duchemin D."/>
            <person name="Cooke R."/>
            <person name="Laudie M."/>
            <person name="Berger-Llauro C."/>
            <person name="Purnelle B."/>
            <person name="Masuy D."/>
            <person name="de Haan M."/>
            <person name="Maarse A.C."/>
            <person name="Alcaraz J.-P."/>
            <person name="Cottet A."/>
            <person name="Casacuberta E."/>
            <person name="Monfort A."/>
            <person name="Argiriou A."/>
            <person name="Flores M."/>
            <person name="Liguori R."/>
            <person name="Vitale D."/>
            <person name="Mannhaupt G."/>
            <person name="Haase D."/>
            <person name="Schoof H."/>
            <person name="Rudd S."/>
            <person name="Zaccaria P."/>
            <person name="Mewes H.-W."/>
            <person name="Mayer K.F.X."/>
            <person name="Kaul S."/>
            <person name="Town C.D."/>
            <person name="Koo H.L."/>
            <person name="Tallon L.J."/>
            <person name="Jenkins J."/>
            <person name="Rooney T."/>
            <person name="Rizzo M."/>
            <person name="Walts A."/>
            <person name="Utterback T."/>
            <person name="Fujii C.Y."/>
            <person name="Shea T.P."/>
            <person name="Creasy T.H."/>
            <person name="Haas B."/>
            <person name="Maiti R."/>
            <person name="Wu D."/>
            <person name="Peterson J."/>
            <person name="Van Aken S."/>
            <person name="Pai G."/>
            <person name="Militscher J."/>
            <person name="Sellers P."/>
            <person name="Gill J.E."/>
            <person name="Feldblyum T.V."/>
            <person name="Preuss D."/>
            <person name="Lin X."/>
            <person name="Nierman W.C."/>
            <person name="Salzberg S.L."/>
            <person name="White O."/>
            <person name="Venter J.C."/>
            <person name="Fraser C.M."/>
            <person name="Kaneko T."/>
            <person name="Nakamura Y."/>
            <person name="Sato S."/>
            <person name="Kato T."/>
            <person name="Asamizu E."/>
            <person name="Sasamoto S."/>
            <person name="Kimura T."/>
            <person name="Idesawa K."/>
            <person name="Kawashima K."/>
            <person name="Kishida Y."/>
            <person name="Kiyokawa C."/>
            <person name="Kohara M."/>
            <person name="Matsumoto M."/>
            <person name="Matsuno A."/>
            <person name="Muraki A."/>
            <person name="Nakayama S."/>
            <person name="Nakazaki N."/>
            <person name="Shinpo S."/>
            <person name="Takeuchi C."/>
            <person name="Wada T."/>
            <person name="Watanabe A."/>
            <person name="Yamada M."/>
            <person name="Yasuda M."/>
            <person name="Tabata S."/>
        </authorList>
    </citation>
    <scope>NUCLEOTIDE SEQUENCE [LARGE SCALE GENOMIC DNA]</scope>
    <source>
        <strain>cv. Columbia</strain>
    </source>
</reference>
<reference key="2">
    <citation type="journal article" date="2017" name="Plant J.">
        <title>Araport11: a complete reannotation of the Arabidopsis thaliana reference genome.</title>
        <authorList>
            <person name="Cheng C.Y."/>
            <person name="Krishnakumar V."/>
            <person name="Chan A.P."/>
            <person name="Thibaud-Nissen F."/>
            <person name="Schobel S."/>
            <person name="Town C.D."/>
        </authorList>
    </citation>
    <scope>GENOME REANNOTATION</scope>
    <source>
        <strain>cv. Columbia</strain>
    </source>
</reference>
<reference key="3">
    <citation type="journal article" date="2003" name="Science">
        <title>Empirical analysis of transcriptional activity in the Arabidopsis genome.</title>
        <authorList>
            <person name="Yamada K."/>
            <person name="Lim J."/>
            <person name="Dale J.M."/>
            <person name="Chen H."/>
            <person name="Shinn P."/>
            <person name="Palm C.J."/>
            <person name="Southwick A.M."/>
            <person name="Wu H.C."/>
            <person name="Kim C.J."/>
            <person name="Nguyen M."/>
            <person name="Pham P.K."/>
            <person name="Cheuk R.F."/>
            <person name="Karlin-Newmann G."/>
            <person name="Liu S.X."/>
            <person name="Lam B."/>
            <person name="Sakano H."/>
            <person name="Wu T."/>
            <person name="Yu G."/>
            <person name="Miranda M."/>
            <person name="Quach H.L."/>
            <person name="Tripp M."/>
            <person name="Chang C.H."/>
            <person name="Lee J.M."/>
            <person name="Toriumi M.J."/>
            <person name="Chan M.M."/>
            <person name="Tang C.C."/>
            <person name="Onodera C.S."/>
            <person name="Deng J.M."/>
            <person name="Akiyama K."/>
            <person name="Ansari Y."/>
            <person name="Arakawa T."/>
            <person name="Banh J."/>
            <person name="Banno F."/>
            <person name="Bowser L."/>
            <person name="Brooks S.Y."/>
            <person name="Carninci P."/>
            <person name="Chao Q."/>
            <person name="Choy N."/>
            <person name="Enju A."/>
            <person name="Goldsmith A.D."/>
            <person name="Gurjal M."/>
            <person name="Hansen N.F."/>
            <person name="Hayashizaki Y."/>
            <person name="Johnson-Hopson C."/>
            <person name="Hsuan V.W."/>
            <person name="Iida K."/>
            <person name="Karnes M."/>
            <person name="Khan S."/>
            <person name="Koesema E."/>
            <person name="Ishida J."/>
            <person name="Jiang P.X."/>
            <person name="Jones T."/>
            <person name="Kawai J."/>
            <person name="Kamiya A."/>
            <person name="Meyers C."/>
            <person name="Nakajima M."/>
            <person name="Narusaka M."/>
            <person name="Seki M."/>
            <person name="Sakurai T."/>
            <person name="Satou M."/>
            <person name="Tamse R."/>
            <person name="Vaysberg M."/>
            <person name="Wallender E.K."/>
            <person name="Wong C."/>
            <person name="Yamamura Y."/>
            <person name="Yuan S."/>
            <person name="Shinozaki K."/>
            <person name="Davis R.W."/>
            <person name="Theologis A."/>
            <person name="Ecker J.R."/>
        </authorList>
    </citation>
    <scope>NUCLEOTIDE SEQUENCE [LARGE SCALE MRNA]</scope>
    <source>
        <strain>cv. Columbia</strain>
    </source>
</reference>
<reference key="4">
    <citation type="journal article" date="2005" name="Proc. Natl. Acad. Sci. U.S.A.">
        <title>Vacuolar Na(+)/H(+) antiporter cation selectivity is regulated by calmodulin from within the vacuole in a Ca2(+)- and pH-dependent manner.</title>
        <authorList>
            <person name="Yamaguchi T."/>
            <person name="Aharon G.S."/>
            <person name="Sottosanto J.B."/>
            <person name="Blumwald E."/>
        </authorList>
    </citation>
    <scope>FUNCTION</scope>
    <scope>SUBCELLULAR LOCATION</scope>
    <scope>INTERACTION WITH NHX1 AND AT2G18750</scope>
</reference>
<reference key="5">
    <citation type="journal article" date="2003" name="New Phytol.">
        <title>Calmodulins and related potential calcium sensors of Arabidopsis.</title>
        <authorList>
            <person name="McCormack E."/>
            <person name="Braam J."/>
        </authorList>
    </citation>
    <scope>GENE FAMILY</scope>
    <scope>NOMENCLATURE</scope>
</reference>
<gene>
    <name type="primary">CML18</name>
    <name type="synonym">CAM15</name>
    <name type="ordered locus">At3g03000</name>
    <name type="ORF">F13E7.5</name>
</gene>
<accession>Q9M8U1</accession>
<organism>
    <name type="scientific">Arabidopsis thaliana</name>
    <name type="common">Mouse-ear cress</name>
    <dbReference type="NCBI Taxonomy" id="3702"/>
    <lineage>
        <taxon>Eukaryota</taxon>
        <taxon>Viridiplantae</taxon>
        <taxon>Streptophyta</taxon>
        <taxon>Embryophyta</taxon>
        <taxon>Tracheophyta</taxon>
        <taxon>Spermatophyta</taxon>
        <taxon>Magnoliopsida</taxon>
        <taxon>eudicotyledons</taxon>
        <taxon>Gunneridae</taxon>
        <taxon>Pentapetalae</taxon>
        <taxon>rosids</taxon>
        <taxon>malvids</taxon>
        <taxon>Brassicales</taxon>
        <taxon>Brassicaceae</taxon>
        <taxon>Camelineae</taxon>
        <taxon>Arabidopsis</taxon>
    </lineage>
</organism>
<evidence type="ECO:0000255" key="1">
    <source>
        <dbReference type="PROSITE-ProRule" id="PRU00448"/>
    </source>
</evidence>
<evidence type="ECO:0000269" key="2">
    <source>
    </source>
</evidence>
<evidence type="ECO:0000305" key="3"/>
<evidence type="ECO:0007829" key="4">
    <source>
        <dbReference type="PDB" id="8RX8"/>
    </source>
</evidence>
<dbReference type="EMBL" id="AC018363">
    <property type="protein sequence ID" value="AAF26959.1"/>
    <property type="molecule type" value="Genomic_DNA"/>
</dbReference>
<dbReference type="EMBL" id="CP002686">
    <property type="protein sequence ID" value="AEE73889.1"/>
    <property type="molecule type" value="Genomic_DNA"/>
</dbReference>
<dbReference type="EMBL" id="AY045602">
    <property type="protein sequence ID" value="AAK73960.1"/>
    <property type="molecule type" value="mRNA"/>
</dbReference>
<dbReference type="EMBL" id="AY090328">
    <property type="protein sequence ID" value="AAL90989.1"/>
    <property type="molecule type" value="mRNA"/>
</dbReference>
<dbReference type="RefSeq" id="NP_186950.1">
    <property type="nucleotide sequence ID" value="NM_111170.2"/>
</dbReference>
<dbReference type="PDB" id="8RX8">
    <property type="method" value="X-ray"/>
    <property type="resolution" value="2.85 A"/>
    <property type="chains" value="A=1-165"/>
</dbReference>
<dbReference type="PDBsum" id="8RX8"/>
<dbReference type="SMR" id="Q9M8U1"/>
<dbReference type="BioGRID" id="6494">
    <property type="interactions" value="11"/>
</dbReference>
<dbReference type="FunCoup" id="Q9M8U1">
    <property type="interactions" value="221"/>
</dbReference>
<dbReference type="IntAct" id="Q9M8U1">
    <property type="interactions" value="13"/>
</dbReference>
<dbReference type="STRING" id="3702.Q9M8U1"/>
<dbReference type="PaxDb" id="3702-AT3G03000.1"/>
<dbReference type="EnsemblPlants" id="AT3G03000.1">
    <property type="protein sequence ID" value="AT3G03000.1"/>
    <property type="gene ID" value="AT3G03000"/>
</dbReference>
<dbReference type="GeneID" id="821161"/>
<dbReference type="Gramene" id="AT3G03000.1">
    <property type="protein sequence ID" value="AT3G03000.1"/>
    <property type="gene ID" value="AT3G03000"/>
</dbReference>
<dbReference type="KEGG" id="ath:AT3G03000"/>
<dbReference type="Araport" id="AT3G03000"/>
<dbReference type="TAIR" id="AT3G03000"/>
<dbReference type="eggNOG" id="KOG0027">
    <property type="taxonomic scope" value="Eukaryota"/>
</dbReference>
<dbReference type="HOGENOM" id="CLU_061288_2_0_1"/>
<dbReference type="InParanoid" id="Q9M8U1"/>
<dbReference type="OMA" id="MSNKQPV"/>
<dbReference type="OrthoDB" id="26525at2759"/>
<dbReference type="PhylomeDB" id="Q9M8U1"/>
<dbReference type="SABIO-RK" id="Q9M8U1"/>
<dbReference type="PRO" id="PR:Q9M8U1"/>
<dbReference type="Proteomes" id="UP000006548">
    <property type="component" value="Chromosome 3"/>
</dbReference>
<dbReference type="ExpressionAtlas" id="Q9M8U1">
    <property type="expression patterns" value="baseline and differential"/>
</dbReference>
<dbReference type="GO" id="GO:0000325">
    <property type="term" value="C:plant-type vacuole"/>
    <property type="evidence" value="ECO:0000314"/>
    <property type="project" value="TAIR"/>
</dbReference>
<dbReference type="GO" id="GO:0005509">
    <property type="term" value="F:calcium ion binding"/>
    <property type="evidence" value="ECO:0007669"/>
    <property type="project" value="InterPro"/>
</dbReference>
<dbReference type="GO" id="GO:0043269">
    <property type="term" value="P:regulation of monoatomic ion transport"/>
    <property type="evidence" value="ECO:0000314"/>
    <property type="project" value="TAIR"/>
</dbReference>
<dbReference type="CDD" id="cd00051">
    <property type="entry name" value="EFh"/>
    <property type="match status" value="1"/>
</dbReference>
<dbReference type="FunFam" id="1.10.238.10:FF:000235">
    <property type="entry name" value="Probable calcium-binding protein CML15"/>
    <property type="match status" value="1"/>
</dbReference>
<dbReference type="FunFam" id="1.10.238.10:FF:000123">
    <property type="entry name" value="probable calcium-binding protein CML18"/>
    <property type="match status" value="1"/>
</dbReference>
<dbReference type="Gene3D" id="1.10.238.10">
    <property type="entry name" value="EF-hand"/>
    <property type="match status" value="2"/>
</dbReference>
<dbReference type="InterPro" id="IPR051111">
    <property type="entry name" value="Ca-binding_regulatory"/>
</dbReference>
<dbReference type="InterPro" id="IPR011992">
    <property type="entry name" value="EF-hand-dom_pair"/>
</dbReference>
<dbReference type="InterPro" id="IPR018247">
    <property type="entry name" value="EF_Hand_1_Ca_BS"/>
</dbReference>
<dbReference type="InterPro" id="IPR002048">
    <property type="entry name" value="EF_hand_dom"/>
</dbReference>
<dbReference type="PANTHER" id="PTHR46311">
    <property type="entry name" value="CALCIUM-BINDING PROTEIN 8-RELATED"/>
    <property type="match status" value="1"/>
</dbReference>
<dbReference type="PANTHER" id="PTHR46311:SF5">
    <property type="entry name" value="EF-HAND DOMAIN-CONTAINING PROTEIN"/>
    <property type="match status" value="1"/>
</dbReference>
<dbReference type="Pfam" id="PF13499">
    <property type="entry name" value="EF-hand_7"/>
    <property type="match status" value="2"/>
</dbReference>
<dbReference type="SMART" id="SM00054">
    <property type="entry name" value="EFh"/>
    <property type="match status" value="4"/>
</dbReference>
<dbReference type="SUPFAM" id="SSF47473">
    <property type="entry name" value="EF-hand"/>
    <property type="match status" value="1"/>
</dbReference>
<dbReference type="PROSITE" id="PS00018">
    <property type="entry name" value="EF_HAND_1"/>
    <property type="match status" value="4"/>
</dbReference>
<dbReference type="PROSITE" id="PS50222">
    <property type="entry name" value="EF_HAND_2"/>
    <property type="match status" value="4"/>
</dbReference>
<keyword id="KW-0002">3D-structure</keyword>
<keyword id="KW-0106">Calcium</keyword>
<keyword id="KW-0479">Metal-binding</keyword>
<keyword id="KW-1185">Reference proteome</keyword>
<keyword id="KW-0677">Repeat</keyword>
<keyword id="KW-0926">Vacuole</keyword>
<sequence length="165" mass="18090">MSCDGGKPAPAKLGDEQLAELREIFRSFDQNKDGSLTELELGSLLRSLGLKPSQDQLDTLIQKADRNNNGLVEFSEFVALVEPDLVKCPYTDDQLKAIFRMFDRDGNGYITAAELAHSMAKLGHALTAEELTGMIKEADRDGDGCIDFQEFVQAITSAAFDNAWG</sequence>
<feature type="chain" id="PRO_0000073654" description="Probable calcium-binding protein CML18">
    <location>
        <begin position="1"/>
        <end position="165"/>
    </location>
</feature>
<feature type="domain" description="EF-hand 1" evidence="1">
    <location>
        <begin position="16"/>
        <end position="51"/>
    </location>
</feature>
<feature type="domain" description="EF-hand 2" evidence="1">
    <location>
        <begin position="52"/>
        <end position="87"/>
    </location>
</feature>
<feature type="domain" description="EF-hand 3" evidence="1">
    <location>
        <begin position="90"/>
        <end position="125"/>
    </location>
</feature>
<feature type="domain" description="EF-hand 4" evidence="1">
    <location>
        <begin position="126"/>
        <end position="161"/>
    </location>
</feature>
<feature type="binding site" evidence="1">
    <location>
        <position position="29"/>
    </location>
    <ligand>
        <name>Ca(2+)</name>
        <dbReference type="ChEBI" id="CHEBI:29108"/>
        <label>1</label>
    </ligand>
</feature>
<feature type="binding site" evidence="1">
    <location>
        <position position="31"/>
    </location>
    <ligand>
        <name>Ca(2+)</name>
        <dbReference type="ChEBI" id="CHEBI:29108"/>
        <label>1</label>
    </ligand>
</feature>
<feature type="binding site" evidence="1">
    <location>
        <position position="33"/>
    </location>
    <ligand>
        <name>Ca(2+)</name>
        <dbReference type="ChEBI" id="CHEBI:29108"/>
        <label>1</label>
    </ligand>
</feature>
<feature type="binding site" evidence="1">
    <location>
        <position position="35"/>
    </location>
    <ligand>
        <name>Ca(2+)</name>
        <dbReference type="ChEBI" id="CHEBI:29108"/>
        <label>1</label>
    </ligand>
</feature>
<feature type="binding site" evidence="1">
    <location>
        <position position="40"/>
    </location>
    <ligand>
        <name>Ca(2+)</name>
        <dbReference type="ChEBI" id="CHEBI:29108"/>
        <label>1</label>
    </ligand>
</feature>
<feature type="binding site" evidence="1">
    <location>
        <position position="65"/>
    </location>
    <ligand>
        <name>Ca(2+)</name>
        <dbReference type="ChEBI" id="CHEBI:29108"/>
        <label>2</label>
    </ligand>
</feature>
<feature type="binding site" evidence="1">
    <location>
        <position position="67"/>
    </location>
    <ligand>
        <name>Ca(2+)</name>
        <dbReference type="ChEBI" id="CHEBI:29108"/>
        <label>2</label>
    </ligand>
</feature>
<feature type="binding site" evidence="1">
    <location>
        <position position="69"/>
    </location>
    <ligand>
        <name>Ca(2+)</name>
        <dbReference type="ChEBI" id="CHEBI:29108"/>
        <label>2</label>
    </ligand>
</feature>
<feature type="binding site" evidence="1">
    <location>
        <position position="76"/>
    </location>
    <ligand>
        <name>Ca(2+)</name>
        <dbReference type="ChEBI" id="CHEBI:29108"/>
        <label>2</label>
    </ligand>
</feature>
<feature type="binding site" evidence="1">
    <location>
        <position position="103"/>
    </location>
    <ligand>
        <name>Ca(2+)</name>
        <dbReference type="ChEBI" id="CHEBI:29108"/>
        <label>3</label>
    </ligand>
</feature>
<feature type="binding site" evidence="1">
    <location>
        <position position="105"/>
    </location>
    <ligand>
        <name>Ca(2+)</name>
        <dbReference type="ChEBI" id="CHEBI:29108"/>
        <label>3</label>
    </ligand>
</feature>
<feature type="binding site" evidence="1">
    <location>
        <position position="107"/>
    </location>
    <ligand>
        <name>Ca(2+)</name>
        <dbReference type="ChEBI" id="CHEBI:29108"/>
        <label>3</label>
    </ligand>
</feature>
<feature type="binding site" evidence="1">
    <location>
        <position position="109"/>
    </location>
    <ligand>
        <name>Ca(2+)</name>
        <dbReference type="ChEBI" id="CHEBI:29108"/>
        <label>3</label>
    </ligand>
</feature>
<feature type="binding site" evidence="1">
    <location>
        <position position="114"/>
    </location>
    <ligand>
        <name>Ca(2+)</name>
        <dbReference type="ChEBI" id="CHEBI:29108"/>
        <label>3</label>
    </ligand>
</feature>
<feature type="binding site" evidence="1">
    <location>
        <position position="139"/>
    </location>
    <ligand>
        <name>Ca(2+)</name>
        <dbReference type="ChEBI" id="CHEBI:29108"/>
        <label>4</label>
    </ligand>
</feature>
<feature type="binding site" evidence="1">
    <location>
        <position position="141"/>
    </location>
    <ligand>
        <name>Ca(2+)</name>
        <dbReference type="ChEBI" id="CHEBI:29108"/>
        <label>4</label>
    </ligand>
</feature>
<feature type="binding site" evidence="1">
    <location>
        <position position="143"/>
    </location>
    <ligand>
        <name>Ca(2+)</name>
        <dbReference type="ChEBI" id="CHEBI:29108"/>
        <label>4</label>
    </ligand>
</feature>
<feature type="binding site" evidence="1">
    <location>
        <position position="145"/>
    </location>
    <ligand>
        <name>Ca(2+)</name>
        <dbReference type="ChEBI" id="CHEBI:29108"/>
        <label>4</label>
    </ligand>
</feature>
<feature type="binding site" evidence="1">
    <location>
        <position position="150"/>
    </location>
    <ligand>
        <name>Ca(2+)</name>
        <dbReference type="ChEBI" id="CHEBI:29108"/>
        <label>4</label>
    </ligand>
</feature>
<feature type="helix" evidence="4">
    <location>
        <begin position="15"/>
        <end position="27"/>
    </location>
</feature>
<feature type="strand" evidence="4">
    <location>
        <begin position="33"/>
        <end position="36"/>
    </location>
</feature>
<feature type="helix" evidence="4">
    <location>
        <begin position="38"/>
        <end position="47"/>
    </location>
</feature>
<feature type="helix" evidence="4">
    <location>
        <begin position="54"/>
        <end position="64"/>
    </location>
</feature>
<feature type="strand" evidence="4">
    <location>
        <begin position="70"/>
        <end position="73"/>
    </location>
</feature>
<feature type="helix" evidence="4">
    <location>
        <begin position="74"/>
        <end position="81"/>
    </location>
</feature>
<feature type="turn" evidence="4">
    <location>
        <begin position="83"/>
        <end position="85"/>
    </location>
</feature>
<feature type="helix" evidence="4">
    <location>
        <begin position="92"/>
        <end position="102"/>
    </location>
</feature>
<feature type="helix" evidence="4">
    <location>
        <begin position="112"/>
        <end position="121"/>
    </location>
</feature>
<feature type="helix" evidence="4">
    <location>
        <begin position="128"/>
        <end position="138"/>
    </location>
</feature>
<feature type="strand" evidence="4">
    <location>
        <begin position="143"/>
        <end position="146"/>
    </location>
</feature>
<feature type="helix" evidence="4">
    <location>
        <begin position="148"/>
        <end position="164"/>
    </location>
</feature>
<protein>
    <recommendedName>
        <fullName>Probable calcium-binding protein CML18</fullName>
    </recommendedName>
    <alternativeName>
        <fullName>Calmodulin-15</fullName>
        <shortName>AtCaM-15</shortName>
    </alternativeName>
    <alternativeName>
        <fullName>Calmodulin-like protein 18</fullName>
    </alternativeName>
</protein>